<gene>
    <name evidence="1" type="primary">hscA</name>
    <name type="ordered locus">PM0322</name>
</gene>
<organism>
    <name type="scientific">Pasteurella multocida (strain Pm70)</name>
    <dbReference type="NCBI Taxonomy" id="272843"/>
    <lineage>
        <taxon>Bacteria</taxon>
        <taxon>Pseudomonadati</taxon>
        <taxon>Pseudomonadota</taxon>
        <taxon>Gammaproteobacteria</taxon>
        <taxon>Pasteurellales</taxon>
        <taxon>Pasteurellaceae</taxon>
        <taxon>Pasteurella</taxon>
    </lineage>
</organism>
<keyword id="KW-0067">ATP-binding</keyword>
<keyword id="KW-0143">Chaperone</keyword>
<keyword id="KW-0547">Nucleotide-binding</keyword>
<keyword id="KW-1185">Reference proteome</keyword>
<name>HSCA_PASMU</name>
<evidence type="ECO:0000255" key="1">
    <source>
        <dbReference type="HAMAP-Rule" id="MF_00679"/>
    </source>
</evidence>
<comment type="function">
    <text evidence="1">Chaperone involved in the maturation of iron-sulfur cluster-containing proteins. Has a low intrinsic ATPase activity which is markedly stimulated by HscB.</text>
</comment>
<comment type="similarity">
    <text evidence="1">Belongs to the heat shock protein 70 family.</text>
</comment>
<feature type="chain" id="PRO_0000078636" description="Chaperone protein HscA homolog">
    <location>
        <begin position="1"/>
        <end position="620"/>
    </location>
</feature>
<protein>
    <recommendedName>
        <fullName evidence="1">Chaperone protein HscA homolog</fullName>
    </recommendedName>
</protein>
<accession>Q9CNV2</accession>
<proteinExistence type="inferred from homology"/>
<dbReference type="EMBL" id="AE004439">
    <property type="protein sequence ID" value="AAK02406.1"/>
    <property type="molecule type" value="Genomic_DNA"/>
</dbReference>
<dbReference type="RefSeq" id="WP_010906587.1">
    <property type="nucleotide sequence ID" value="NC_002663.1"/>
</dbReference>
<dbReference type="SMR" id="Q9CNV2"/>
<dbReference type="STRING" id="272843.PM0322"/>
<dbReference type="EnsemblBacteria" id="AAK02406">
    <property type="protein sequence ID" value="AAK02406"/>
    <property type="gene ID" value="PM0322"/>
</dbReference>
<dbReference type="KEGG" id="pmu:PM0322"/>
<dbReference type="PATRIC" id="fig|272843.6.peg.335"/>
<dbReference type="HOGENOM" id="CLU_005965_2_1_6"/>
<dbReference type="OrthoDB" id="9766019at2"/>
<dbReference type="Proteomes" id="UP000000809">
    <property type="component" value="Chromosome"/>
</dbReference>
<dbReference type="GO" id="GO:0005524">
    <property type="term" value="F:ATP binding"/>
    <property type="evidence" value="ECO:0007669"/>
    <property type="project" value="UniProtKB-KW"/>
</dbReference>
<dbReference type="GO" id="GO:0016887">
    <property type="term" value="F:ATP hydrolysis activity"/>
    <property type="evidence" value="ECO:0007669"/>
    <property type="project" value="UniProtKB-UniRule"/>
</dbReference>
<dbReference type="GO" id="GO:0140662">
    <property type="term" value="F:ATP-dependent protein folding chaperone"/>
    <property type="evidence" value="ECO:0007669"/>
    <property type="project" value="InterPro"/>
</dbReference>
<dbReference type="GO" id="GO:0051082">
    <property type="term" value="F:unfolded protein binding"/>
    <property type="evidence" value="ECO:0007669"/>
    <property type="project" value="InterPro"/>
</dbReference>
<dbReference type="GO" id="GO:0016226">
    <property type="term" value="P:iron-sulfur cluster assembly"/>
    <property type="evidence" value="ECO:0007669"/>
    <property type="project" value="InterPro"/>
</dbReference>
<dbReference type="CDD" id="cd10236">
    <property type="entry name" value="ASKHA_NBD_HSP70_HscA"/>
    <property type="match status" value="1"/>
</dbReference>
<dbReference type="FunFam" id="3.30.420.40:FF:000046">
    <property type="entry name" value="Chaperone protein HscA"/>
    <property type="match status" value="1"/>
</dbReference>
<dbReference type="FunFam" id="2.60.34.10:FF:000005">
    <property type="entry name" value="Chaperone protein HscA homolog"/>
    <property type="match status" value="1"/>
</dbReference>
<dbReference type="FunFam" id="3.30.420.40:FF:000020">
    <property type="entry name" value="Chaperone protein HscA homolog"/>
    <property type="match status" value="1"/>
</dbReference>
<dbReference type="Gene3D" id="1.20.1270.10">
    <property type="match status" value="1"/>
</dbReference>
<dbReference type="Gene3D" id="3.30.420.40">
    <property type="match status" value="2"/>
</dbReference>
<dbReference type="Gene3D" id="3.90.640.10">
    <property type="entry name" value="Actin, Chain A, domain 4"/>
    <property type="match status" value="1"/>
</dbReference>
<dbReference type="Gene3D" id="2.60.34.10">
    <property type="entry name" value="Substrate Binding Domain Of DNAk, Chain A, domain 1"/>
    <property type="match status" value="1"/>
</dbReference>
<dbReference type="HAMAP" id="MF_00679">
    <property type="entry name" value="HscA"/>
    <property type="match status" value="1"/>
</dbReference>
<dbReference type="InterPro" id="IPR043129">
    <property type="entry name" value="ATPase_NBD"/>
</dbReference>
<dbReference type="InterPro" id="IPR018181">
    <property type="entry name" value="Heat_shock_70_CS"/>
</dbReference>
<dbReference type="InterPro" id="IPR042039">
    <property type="entry name" value="HscA_NBD"/>
</dbReference>
<dbReference type="InterPro" id="IPR029048">
    <property type="entry name" value="HSP70_C_sf"/>
</dbReference>
<dbReference type="InterPro" id="IPR029047">
    <property type="entry name" value="HSP70_peptide-bd_sf"/>
</dbReference>
<dbReference type="InterPro" id="IPR013126">
    <property type="entry name" value="Hsp_70_fam"/>
</dbReference>
<dbReference type="InterPro" id="IPR010236">
    <property type="entry name" value="ISC_FeS_clus_asmbl_HscA"/>
</dbReference>
<dbReference type="NCBIfam" id="TIGR01991">
    <property type="entry name" value="HscA"/>
    <property type="match status" value="1"/>
</dbReference>
<dbReference type="NCBIfam" id="NF003520">
    <property type="entry name" value="PRK05183.1"/>
    <property type="match status" value="1"/>
</dbReference>
<dbReference type="PANTHER" id="PTHR19375">
    <property type="entry name" value="HEAT SHOCK PROTEIN 70KDA"/>
    <property type="match status" value="1"/>
</dbReference>
<dbReference type="Pfam" id="PF00012">
    <property type="entry name" value="HSP70"/>
    <property type="match status" value="1"/>
</dbReference>
<dbReference type="PRINTS" id="PR00301">
    <property type="entry name" value="HEATSHOCK70"/>
</dbReference>
<dbReference type="SUPFAM" id="SSF53067">
    <property type="entry name" value="Actin-like ATPase domain"/>
    <property type="match status" value="2"/>
</dbReference>
<dbReference type="SUPFAM" id="SSF100934">
    <property type="entry name" value="Heat shock protein 70kD (HSP70), C-terminal subdomain"/>
    <property type="match status" value="1"/>
</dbReference>
<dbReference type="SUPFAM" id="SSF100920">
    <property type="entry name" value="Heat shock protein 70kD (HSP70), peptide-binding domain"/>
    <property type="match status" value="1"/>
</dbReference>
<dbReference type="PROSITE" id="PS00297">
    <property type="entry name" value="HSP70_1"/>
    <property type="match status" value="1"/>
</dbReference>
<dbReference type="PROSITE" id="PS00329">
    <property type="entry name" value="HSP70_2"/>
    <property type="match status" value="1"/>
</dbReference>
<dbReference type="PROSITE" id="PS01036">
    <property type="entry name" value="HSP70_3"/>
    <property type="match status" value="1"/>
</dbReference>
<sequence length="620" mass="66786">MALLQIAEPGQSASPHQHKLAVGIDLGTTNSLIATVRSGQVDILLDEKERPLLPSVVHFEQDNVIVGYEAAELASQSPQNTIVSVKRLIGRSLADVQQRYPSLPYQFEASENGLPLIRTSKGTLSPVEISAEILKKLTALAEKRLAGELSGAVITVPAYFDDAQRQSTKDAAKLAGINVLRLLNEPTAAAIAYGLDSGQEGVIAVYDLGGGTFDISILRLSKGVFEVLATGGDTALGGDDFDHQLMDWIVAQSGIAPQNAQQQRQLTELATQIKIALTDKLETSISYQGWQGNISREQFNQLIQGLVKRSLLACRRALKDADVSADEVCEVVMVGGSTRVPFVREQVAAFFQKEPLTSIDPDKVVALGAGIQADILVGNKPDADMLLLDVIPLSLGIETMGGLVEKIIPRNTTIPVARAQEFTTFKDGQTAMSVHVVQGEREMVADCRSLARFSLRGIPAMAAGAAHVRVTYQVDADGLLSVTAMEKSTGVQSSIQVKPSYGLSDDEITNMLKASMLNAKEDIQARLLAEQRVEAQRVLESVGSALSADQDLLNDEELSAVKNAIISLQRLQKEGDTQEIKQGIKQLDLATQEFASRRMDKSIRQALAGKAIDDVMKNAK</sequence>
<reference key="1">
    <citation type="journal article" date="2001" name="Proc. Natl. Acad. Sci. U.S.A.">
        <title>Complete genomic sequence of Pasteurella multocida Pm70.</title>
        <authorList>
            <person name="May B.J."/>
            <person name="Zhang Q."/>
            <person name="Li L.L."/>
            <person name="Paustian M.L."/>
            <person name="Whittam T.S."/>
            <person name="Kapur V."/>
        </authorList>
    </citation>
    <scope>NUCLEOTIDE SEQUENCE [LARGE SCALE GENOMIC DNA]</scope>
    <source>
        <strain>Pm70</strain>
    </source>
</reference>